<gene>
    <name evidence="1" type="primary">rnfA</name>
    <name type="ordered locus">Sden_1863</name>
</gene>
<protein>
    <recommendedName>
        <fullName evidence="1">Ion-translocating oxidoreductase complex subunit A</fullName>
        <ecNumber evidence="1">7.-.-.-</ecNumber>
    </recommendedName>
    <alternativeName>
        <fullName evidence="1">Rnf electron transport complex subunit A</fullName>
    </alternativeName>
</protein>
<comment type="function">
    <text evidence="1">Part of a membrane-bound complex that couples electron transfer with translocation of ions across the membrane.</text>
</comment>
<comment type="subunit">
    <text evidence="1">The complex is composed of six subunits: RnfA, RnfB, RnfC, RnfD, RnfE and RnfG.</text>
</comment>
<comment type="subcellular location">
    <subcellularLocation>
        <location evidence="1">Cell inner membrane</location>
        <topology evidence="1">Multi-pass membrane protein</topology>
    </subcellularLocation>
</comment>
<comment type="similarity">
    <text evidence="1">Belongs to the NqrDE/RnfAE family.</text>
</comment>
<proteinExistence type="inferred from homology"/>
<keyword id="KW-0997">Cell inner membrane</keyword>
<keyword id="KW-1003">Cell membrane</keyword>
<keyword id="KW-0249">Electron transport</keyword>
<keyword id="KW-0472">Membrane</keyword>
<keyword id="KW-1185">Reference proteome</keyword>
<keyword id="KW-1278">Translocase</keyword>
<keyword id="KW-0812">Transmembrane</keyword>
<keyword id="KW-1133">Transmembrane helix</keyword>
<keyword id="KW-0813">Transport</keyword>
<evidence type="ECO:0000255" key="1">
    <source>
        <dbReference type="HAMAP-Rule" id="MF_00459"/>
    </source>
</evidence>
<name>RNFA_SHEDO</name>
<accession>Q12N30</accession>
<reference key="1">
    <citation type="submission" date="2006-03" db="EMBL/GenBank/DDBJ databases">
        <title>Complete sequence of Shewanella denitrificans OS217.</title>
        <authorList>
            <consortium name="US DOE Joint Genome Institute"/>
            <person name="Copeland A."/>
            <person name="Lucas S."/>
            <person name="Lapidus A."/>
            <person name="Barry K."/>
            <person name="Detter J.C."/>
            <person name="Glavina del Rio T."/>
            <person name="Hammon N."/>
            <person name="Israni S."/>
            <person name="Dalin E."/>
            <person name="Tice H."/>
            <person name="Pitluck S."/>
            <person name="Brettin T."/>
            <person name="Bruce D."/>
            <person name="Han C."/>
            <person name="Tapia R."/>
            <person name="Gilna P."/>
            <person name="Kiss H."/>
            <person name="Schmutz J."/>
            <person name="Larimer F."/>
            <person name="Land M."/>
            <person name="Hauser L."/>
            <person name="Kyrpides N."/>
            <person name="Lykidis A."/>
            <person name="Richardson P."/>
        </authorList>
    </citation>
    <scope>NUCLEOTIDE SEQUENCE [LARGE SCALE GENOMIC DNA]</scope>
    <source>
        <strain>OS217 / ATCC BAA-1090 / DSM 15013</strain>
    </source>
</reference>
<feature type="chain" id="PRO_1000013548" description="Ion-translocating oxidoreductase complex subunit A">
    <location>
        <begin position="1"/>
        <end position="192"/>
    </location>
</feature>
<feature type="transmembrane region" description="Helical" evidence="1">
    <location>
        <begin position="5"/>
        <end position="25"/>
    </location>
</feature>
<feature type="transmembrane region" description="Helical" evidence="1">
    <location>
        <begin position="38"/>
        <end position="58"/>
    </location>
</feature>
<feature type="transmembrane region" description="Helical" evidence="1">
    <location>
        <begin position="72"/>
        <end position="92"/>
    </location>
</feature>
<feature type="transmembrane region" description="Helical" evidence="1">
    <location>
        <begin position="102"/>
        <end position="122"/>
    </location>
</feature>
<feature type="transmembrane region" description="Helical" evidence="1">
    <location>
        <begin position="134"/>
        <end position="154"/>
    </location>
</feature>
<feature type="transmembrane region" description="Helical" evidence="1">
    <location>
        <begin position="171"/>
        <end position="191"/>
    </location>
</feature>
<organism>
    <name type="scientific">Shewanella denitrificans (strain OS217 / ATCC BAA-1090 / DSM 15013)</name>
    <dbReference type="NCBI Taxonomy" id="318161"/>
    <lineage>
        <taxon>Bacteria</taxon>
        <taxon>Pseudomonadati</taxon>
        <taxon>Pseudomonadota</taxon>
        <taxon>Gammaproteobacteria</taxon>
        <taxon>Alteromonadales</taxon>
        <taxon>Shewanellaceae</taxon>
        <taxon>Shewanella</taxon>
    </lineage>
</organism>
<dbReference type="EC" id="7.-.-.-" evidence="1"/>
<dbReference type="EMBL" id="CP000302">
    <property type="protein sequence ID" value="ABE55146.1"/>
    <property type="molecule type" value="Genomic_DNA"/>
</dbReference>
<dbReference type="RefSeq" id="WP_011496303.1">
    <property type="nucleotide sequence ID" value="NC_007954.1"/>
</dbReference>
<dbReference type="SMR" id="Q12N30"/>
<dbReference type="STRING" id="318161.Sden_1863"/>
<dbReference type="KEGG" id="sdn:Sden_1863"/>
<dbReference type="eggNOG" id="COG4657">
    <property type="taxonomic scope" value="Bacteria"/>
</dbReference>
<dbReference type="HOGENOM" id="CLU_095255_1_0_6"/>
<dbReference type="OrthoDB" id="9803631at2"/>
<dbReference type="Proteomes" id="UP000001982">
    <property type="component" value="Chromosome"/>
</dbReference>
<dbReference type="GO" id="GO:0005886">
    <property type="term" value="C:plasma membrane"/>
    <property type="evidence" value="ECO:0007669"/>
    <property type="project" value="UniProtKB-SubCell"/>
</dbReference>
<dbReference type="GO" id="GO:0022900">
    <property type="term" value="P:electron transport chain"/>
    <property type="evidence" value="ECO:0007669"/>
    <property type="project" value="UniProtKB-UniRule"/>
</dbReference>
<dbReference type="HAMAP" id="MF_00459">
    <property type="entry name" value="RsxA_RnfA"/>
    <property type="match status" value="1"/>
</dbReference>
<dbReference type="InterPro" id="IPR011293">
    <property type="entry name" value="Ion_transpt_RnfA/RsxA"/>
</dbReference>
<dbReference type="InterPro" id="IPR003667">
    <property type="entry name" value="NqrDE/RnfAE"/>
</dbReference>
<dbReference type="InterPro" id="IPR050133">
    <property type="entry name" value="NqrDE/RnfAE_oxidrdctase"/>
</dbReference>
<dbReference type="NCBIfam" id="NF003481">
    <property type="entry name" value="PRK05151.1"/>
    <property type="match status" value="1"/>
</dbReference>
<dbReference type="NCBIfam" id="TIGR01943">
    <property type="entry name" value="rnfA"/>
    <property type="match status" value="1"/>
</dbReference>
<dbReference type="PANTHER" id="PTHR30335">
    <property type="entry name" value="INTEGRAL MEMBRANE PROTEIN OF SOXR-REDUCING COMPLEX"/>
    <property type="match status" value="1"/>
</dbReference>
<dbReference type="PANTHER" id="PTHR30335:SF0">
    <property type="entry name" value="ION-TRANSLOCATING OXIDOREDUCTASE COMPLEX SUBUNIT A"/>
    <property type="match status" value="1"/>
</dbReference>
<dbReference type="Pfam" id="PF02508">
    <property type="entry name" value="Rnf-Nqr"/>
    <property type="match status" value="1"/>
</dbReference>
<dbReference type="PIRSF" id="PIRSF006102">
    <property type="entry name" value="NQR_DE"/>
    <property type="match status" value="1"/>
</dbReference>
<sequence length="192" mass="20660">MTEYLLLLIGTVLVNNFVLVKFLGLCPFMGVSSKLASAIGMSMATTFVLTLASVLSFLTNEFLLQPFSLEYLRTMSFILVIAVVVQFTEMLVQKTSASLHRALGIYLPLITTNCAVLGVALLNINEDHNFIESAIYGFGAAVGFSMVLILFSAMRERLAAADVPLPFRGGAIAMITAGLMSLAFMGFAGLIK</sequence>